<protein>
    <recommendedName>
        <fullName>Protein naked cuticle</fullName>
    </recommendedName>
    <alternativeName>
        <fullName>dNkd</fullName>
    </alternativeName>
</protein>
<name>NKD_DROME</name>
<accession>Q9VVV9</accession>
<accession>Q95RL6</accession>
<accession>Q9NIH2</accession>
<accession>Q9VVW0</accession>
<comment type="function">
    <text evidence="3 4 6 8 9">Cell autonomous antagonist of the canonical Wnt signaling pathway. May activate a second Wnt signaling pathway that controls planar cell polarity. Required for neuroblast specification.</text>
</comment>
<comment type="subunit">
    <text evidence="4 5 7 9">Interacts with dsh. This interaction may be stabilized by zinc.</text>
</comment>
<comment type="interaction">
    <interactant intactId="EBI-125843">
        <id>Q9VVV9</id>
    </interactant>
    <interactant intactId="EBI-499383">
        <id>P51140</id>
        <label>dsh</label>
    </interactant>
    <organismsDiffer>false</organismsDiffer>
    <experiments>10</experiments>
</comment>
<comment type="subcellular location">
    <subcellularLocation>
        <location evidence="3">Cell membrane</location>
    </subcellularLocation>
    <subcellularLocation>
        <location evidence="3 9">Cytoplasm</location>
    </subcellularLocation>
    <subcellularLocation>
        <location evidence="9">Nucleus</location>
    </subcellularLocation>
</comment>
<comment type="developmental stage">
    <text evidence="3 5 9">Highly expressed from 2-8 hours after egg laying (AEL). Expressed in broad anterior and posterior domains in stage 6 embryos (late cellular blastoderm). Almost ubiquitous in stage 8/9 embryos with higher levels anterior to the hh/en stripe. This anterior bias persists in stage 10 embryos. Absent from hh/en-producing cells. Expressed in the wing margins of third instar larvae.</text>
</comment>
<comment type="induction">
    <text evidence="3">Expression in embryos and imaginal disks is induced by activation of the Wnt signaling pathway.</text>
</comment>
<comment type="similarity">
    <text evidence="11">Belongs to the NKD family.</text>
</comment>
<comment type="sequence caution" evidence="11">
    <conflict type="erroneous initiation">
        <sequence resource="EMBL-CDS" id="AAL28842"/>
    </conflict>
</comment>
<keyword id="KW-1003">Cell membrane</keyword>
<keyword id="KW-0963">Cytoplasm</keyword>
<keyword id="KW-0217">Developmental protein</keyword>
<keyword id="KW-0472">Membrane</keyword>
<keyword id="KW-0479">Metal-binding</keyword>
<keyword id="KW-0539">Nucleus</keyword>
<keyword id="KW-0597">Phosphoprotein</keyword>
<keyword id="KW-1185">Reference proteome</keyword>
<keyword id="KW-0879">Wnt signaling pathway</keyword>
<keyword id="KW-0862">Zinc</keyword>
<sequence length="928" mass="102601">MAGNIVKWWKHKILGGYKQFSVQECTTDSEELMYHQVRASSSCSAPPDLLLVSERDNNIQLRSPVVNIITTPPGNASGAGSKQQSHHQTNHHSSGRSHPGHTAHPQDVSSGGSHSKHLRISSTSNGKHGKYSNMQQQLPQDEDVVDAAATMQQQQHTGHAHSRHLHHHKEERIRLEEFTCDVSVEGGKSSQPLQFSFTFYDLDGHHGKITKDDIVGIVYTIYESIGKSVVVPHCGSKTINVRLTVSPEGKSKSQPVVPVPVAAGFSSSHASKLKKLPTGLAAMSKPLAGGGVGSGGASALTTSAGNRRQHRYRPRKLIKSDDEDDDSNSEKEKDAAHAPAADQPSGSGTKATGKSHHHQSQSARYHQKNNSRAEQCCTEQNTPDNGHNTYENMLNLKCCKPEVDQVDCPSHRQHHQSHPNHQMRQQDIYMKQATQRVKMLRRARKQKYQDHCLETRQRSLSVGNDSACPNRHLQLQQPPVGHPQPQSLNHKSASGSPPLGVGGGGDMMLDGVQLRQPRPHSLTPHQHQQQNQQQQQQQRKSAECWKSALNRNDLISIIRESMEKNRLCFQLNGKPQANVSPIRQPAAQQQPQQQQRQRCNTGSKIPTLITNHSPVAQQSPLSCSPPTAEPTTPSIPAAPPAIEVNGQQHHPTHPTHPSHHNHHEHPQPHIPIYHQQLAINPAVLAAQQTHNTAHNKLNLCGYDSFLHATICGGGAAAHSPPATPSNVATVQPIPKKSQKNLLQGYQRLEQSQQQQQQQRSSKDYKNYGNLIYAKLSEQLQQKDREQRRQRHKQQQHQMLQDQPKDASRSEQRPPTSNSSSAGSKIYGDAVECAHLLASEEEDLPPSPQLTSTPSKVVSTDTLIDLNDDVGEAVAEAVTEGGKQSLEAEESGQQVEVELDTSASSSMIHRYVHEHIHHHYHHFKEQQDV</sequence>
<organism>
    <name type="scientific">Drosophila melanogaster</name>
    <name type="common">Fruit fly</name>
    <dbReference type="NCBI Taxonomy" id="7227"/>
    <lineage>
        <taxon>Eukaryota</taxon>
        <taxon>Metazoa</taxon>
        <taxon>Ecdysozoa</taxon>
        <taxon>Arthropoda</taxon>
        <taxon>Hexapoda</taxon>
        <taxon>Insecta</taxon>
        <taxon>Pterygota</taxon>
        <taxon>Neoptera</taxon>
        <taxon>Endopterygota</taxon>
        <taxon>Diptera</taxon>
        <taxon>Brachycera</taxon>
        <taxon>Muscomorpha</taxon>
        <taxon>Ephydroidea</taxon>
        <taxon>Drosophilidae</taxon>
        <taxon>Drosophila</taxon>
        <taxon>Sophophora</taxon>
    </lineage>
</organism>
<gene>
    <name type="primary">nkd</name>
    <name type="ORF">CG11614</name>
</gene>
<feature type="chain" id="PRO_0000301998" description="Protein naked cuticle">
    <location>
        <begin position="1"/>
        <end position="928"/>
    </location>
</feature>
<feature type="domain" description="EF-hand" evidence="1">
    <location>
        <begin position="188"/>
        <end position="224"/>
    </location>
</feature>
<feature type="region of interest" description="Disordered" evidence="2">
    <location>
        <begin position="68"/>
        <end position="133"/>
    </location>
</feature>
<feature type="region of interest" description="Interaction with dsh">
    <location>
        <begin position="177"/>
        <end position="253"/>
    </location>
</feature>
<feature type="region of interest" description="Important for binding to zinc" evidence="7">
    <location>
        <begin position="227"/>
        <end position="372"/>
    </location>
</feature>
<feature type="region of interest" description="Disordered" evidence="2">
    <location>
        <begin position="291"/>
        <end position="368"/>
    </location>
</feature>
<feature type="region of interest" description="Disordered" evidence="2">
    <location>
        <begin position="462"/>
        <end position="543"/>
    </location>
</feature>
<feature type="region of interest" description="Required for nuclear localization and inhibition of Wnt signaling">
    <location>
        <begin position="543"/>
        <end position="572"/>
    </location>
</feature>
<feature type="region of interest" description="Disordered" evidence="2">
    <location>
        <begin position="578"/>
        <end position="600"/>
    </location>
</feature>
<feature type="region of interest" description="Disordered" evidence="2">
    <location>
        <begin position="614"/>
        <end position="668"/>
    </location>
</feature>
<feature type="region of interest" description="Disordered" evidence="2">
    <location>
        <begin position="779"/>
        <end position="825"/>
    </location>
</feature>
<feature type="compositionally biased region" description="Polar residues" evidence="2">
    <location>
        <begin position="68"/>
        <end position="80"/>
    </location>
</feature>
<feature type="compositionally biased region" description="Basic residues" evidence="2">
    <location>
        <begin position="84"/>
        <end position="101"/>
    </location>
</feature>
<feature type="compositionally biased region" description="Polar residues" evidence="2">
    <location>
        <begin position="120"/>
        <end position="133"/>
    </location>
</feature>
<feature type="compositionally biased region" description="Basic residues" evidence="2">
    <location>
        <begin position="307"/>
        <end position="317"/>
    </location>
</feature>
<feature type="compositionally biased region" description="Basic residues" evidence="2">
    <location>
        <begin position="353"/>
        <end position="368"/>
    </location>
</feature>
<feature type="compositionally biased region" description="Polar residues" evidence="2">
    <location>
        <begin position="484"/>
        <end position="493"/>
    </location>
</feature>
<feature type="compositionally biased region" description="Low complexity" evidence="2">
    <location>
        <begin position="525"/>
        <end position="538"/>
    </location>
</feature>
<feature type="compositionally biased region" description="Low complexity" evidence="2">
    <location>
        <begin position="583"/>
        <end position="598"/>
    </location>
</feature>
<feature type="compositionally biased region" description="Low complexity" evidence="2">
    <location>
        <begin position="624"/>
        <end position="649"/>
    </location>
</feature>
<feature type="compositionally biased region" description="Basic residues" evidence="2">
    <location>
        <begin position="650"/>
        <end position="663"/>
    </location>
</feature>
<feature type="compositionally biased region" description="Basic and acidic residues" evidence="2">
    <location>
        <begin position="802"/>
        <end position="811"/>
    </location>
</feature>
<feature type="compositionally biased region" description="Polar residues" evidence="2">
    <location>
        <begin position="812"/>
        <end position="822"/>
    </location>
</feature>
<feature type="modified residue" description="Phosphoserine" evidence="10">
    <location>
        <position position="320"/>
    </location>
</feature>
<feature type="modified residue" description="Phosphoserine" evidence="10">
    <location>
        <position position="327"/>
    </location>
</feature>
<feature type="modified residue" description="Phosphoserine" evidence="10">
    <location>
        <position position="329"/>
    </location>
</feature>
<feature type="sequence conflict" description="In Ref. 1; AAF34825." evidence="11" ref="1">
    <original>H</original>
    <variation>Q</variation>
    <location>
        <position position="525"/>
    </location>
</feature>
<feature type="sequence conflict" description="In Ref. 1; AAF34825." evidence="11" ref="1">
    <original>D</original>
    <variation>N</variation>
    <location>
        <position position="864"/>
    </location>
</feature>
<reference key="1">
    <citation type="journal article" date="2000" name="Nature">
        <title>naked cuticle encodes an inducible antagonist of Wnt signalling.</title>
        <authorList>
            <person name="Zeng W."/>
            <person name="Wharton K.A. Jr."/>
            <person name="Mack J.A."/>
            <person name="Wang K."/>
            <person name="Gadbaw M."/>
            <person name="Suyama K."/>
            <person name="Klein P.S."/>
            <person name="Scott M.P."/>
        </authorList>
    </citation>
    <scope>NUCLEOTIDE SEQUENCE [MRNA]</scope>
    <scope>FUNCTION</scope>
    <scope>SUBCELLULAR LOCATION</scope>
    <scope>DEVELOPMENTAL STAGE</scope>
    <scope>INDUCTION</scope>
</reference>
<reference key="2">
    <citation type="journal article" date="2000" name="Science">
        <title>The genome sequence of Drosophila melanogaster.</title>
        <authorList>
            <person name="Adams M.D."/>
            <person name="Celniker S.E."/>
            <person name="Holt R.A."/>
            <person name="Evans C.A."/>
            <person name="Gocayne J.D."/>
            <person name="Amanatides P.G."/>
            <person name="Scherer S.E."/>
            <person name="Li P.W."/>
            <person name="Hoskins R.A."/>
            <person name="Galle R.F."/>
            <person name="George R.A."/>
            <person name="Lewis S.E."/>
            <person name="Richards S."/>
            <person name="Ashburner M."/>
            <person name="Henderson S.N."/>
            <person name="Sutton G.G."/>
            <person name="Wortman J.R."/>
            <person name="Yandell M.D."/>
            <person name="Zhang Q."/>
            <person name="Chen L.X."/>
            <person name="Brandon R.C."/>
            <person name="Rogers Y.-H.C."/>
            <person name="Blazej R.G."/>
            <person name="Champe M."/>
            <person name="Pfeiffer B.D."/>
            <person name="Wan K.H."/>
            <person name="Doyle C."/>
            <person name="Baxter E.G."/>
            <person name="Helt G."/>
            <person name="Nelson C.R."/>
            <person name="Miklos G.L.G."/>
            <person name="Abril J.F."/>
            <person name="Agbayani A."/>
            <person name="An H.-J."/>
            <person name="Andrews-Pfannkoch C."/>
            <person name="Baldwin D."/>
            <person name="Ballew R.M."/>
            <person name="Basu A."/>
            <person name="Baxendale J."/>
            <person name="Bayraktaroglu L."/>
            <person name="Beasley E.M."/>
            <person name="Beeson K.Y."/>
            <person name="Benos P.V."/>
            <person name="Berman B.P."/>
            <person name="Bhandari D."/>
            <person name="Bolshakov S."/>
            <person name="Borkova D."/>
            <person name="Botchan M.R."/>
            <person name="Bouck J."/>
            <person name="Brokstein P."/>
            <person name="Brottier P."/>
            <person name="Burtis K.C."/>
            <person name="Busam D.A."/>
            <person name="Butler H."/>
            <person name="Cadieu E."/>
            <person name="Center A."/>
            <person name="Chandra I."/>
            <person name="Cherry J.M."/>
            <person name="Cawley S."/>
            <person name="Dahlke C."/>
            <person name="Davenport L.B."/>
            <person name="Davies P."/>
            <person name="de Pablos B."/>
            <person name="Delcher A."/>
            <person name="Deng Z."/>
            <person name="Mays A.D."/>
            <person name="Dew I."/>
            <person name="Dietz S.M."/>
            <person name="Dodson K."/>
            <person name="Doup L.E."/>
            <person name="Downes M."/>
            <person name="Dugan-Rocha S."/>
            <person name="Dunkov B.C."/>
            <person name="Dunn P."/>
            <person name="Durbin K.J."/>
            <person name="Evangelista C.C."/>
            <person name="Ferraz C."/>
            <person name="Ferriera S."/>
            <person name="Fleischmann W."/>
            <person name="Fosler C."/>
            <person name="Gabrielian A.E."/>
            <person name="Garg N.S."/>
            <person name="Gelbart W.M."/>
            <person name="Glasser K."/>
            <person name="Glodek A."/>
            <person name="Gong F."/>
            <person name="Gorrell J.H."/>
            <person name="Gu Z."/>
            <person name="Guan P."/>
            <person name="Harris M."/>
            <person name="Harris N.L."/>
            <person name="Harvey D.A."/>
            <person name="Heiman T.J."/>
            <person name="Hernandez J.R."/>
            <person name="Houck J."/>
            <person name="Hostin D."/>
            <person name="Houston K.A."/>
            <person name="Howland T.J."/>
            <person name="Wei M.-H."/>
            <person name="Ibegwam C."/>
            <person name="Jalali M."/>
            <person name="Kalush F."/>
            <person name="Karpen G.H."/>
            <person name="Ke Z."/>
            <person name="Kennison J.A."/>
            <person name="Ketchum K.A."/>
            <person name="Kimmel B.E."/>
            <person name="Kodira C.D."/>
            <person name="Kraft C.L."/>
            <person name="Kravitz S."/>
            <person name="Kulp D."/>
            <person name="Lai Z."/>
            <person name="Lasko P."/>
            <person name="Lei Y."/>
            <person name="Levitsky A.A."/>
            <person name="Li J.H."/>
            <person name="Li Z."/>
            <person name="Liang Y."/>
            <person name="Lin X."/>
            <person name="Liu X."/>
            <person name="Mattei B."/>
            <person name="McIntosh T.C."/>
            <person name="McLeod M.P."/>
            <person name="McPherson D."/>
            <person name="Merkulov G."/>
            <person name="Milshina N.V."/>
            <person name="Mobarry C."/>
            <person name="Morris J."/>
            <person name="Moshrefi A."/>
            <person name="Mount S.M."/>
            <person name="Moy M."/>
            <person name="Murphy B."/>
            <person name="Murphy L."/>
            <person name="Muzny D.M."/>
            <person name="Nelson D.L."/>
            <person name="Nelson D.R."/>
            <person name="Nelson K.A."/>
            <person name="Nixon K."/>
            <person name="Nusskern D.R."/>
            <person name="Pacleb J.M."/>
            <person name="Palazzolo M."/>
            <person name="Pittman G.S."/>
            <person name="Pan S."/>
            <person name="Pollard J."/>
            <person name="Puri V."/>
            <person name="Reese M.G."/>
            <person name="Reinert K."/>
            <person name="Remington K."/>
            <person name="Saunders R.D.C."/>
            <person name="Scheeler F."/>
            <person name="Shen H."/>
            <person name="Shue B.C."/>
            <person name="Siden-Kiamos I."/>
            <person name="Simpson M."/>
            <person name="Skupski M.P."/>
            <person name="Smith T.J."/>
            <person name="Spier E."/>
            <person name="Spradling A.C."/>
            <person name="Stapleton M."/>
            <person name="Strong R."/>
            <person name="Sun E."/>
            <person name="Svirskas R."/>
            <person name="Tector C."/>
            <person name="Turner R."/>
            <person name="Venter E."/>
            <person name="Wang A.H."/>
            <person name="Wang X."/>
            <person name="Wang Z.-Y."/>
            <person name="Wassarman D.A."/>
            <person name="Weinstock G.M."/>
            <person name="Weissenbach J."/>
            <person name="Williams S.M."/>
            <person name="Woodage T."/>
            <person name="Worley K.C."/>
            <person name="Wu D."/>
            <person name="Yang S."/>
            <person name="Yao Q.A."/>
            <person name="Ye J."/>
            <person name="Yeh R.-F."/>
            <person name="Zaveri J.S."/>
            <person name="Zhan M."/>
            <person name="Zhang G."/>
            <person name="Zhao Q."/>
            <person name="Zheng L."/>
            <person name="Zheng X.H."/>
            <person name="Zhong F.N."/>
            <person name="Zhong W."/>
            <person name="Zhou X."/>
            <person name="Zhu S.C."/>
            <person name="Zhu X."/>
            <person name="Smith H.O."/>
            <person name="Gibbs R.A."/>
            <person name="Myers E.W."/>
            <person name="Rubin G.M."/>
            <person name="Venter J.C."/>
        </authorList>
    </citation>
    <scope>NUCLEOTIDE SEQUENCE [LARGE SCALE GENOMIC DNA]</scope>
    <source>
        <strain>Berkeley</strain>
    </source>
</reference>
<reference key="3">
    <citation type="journal article" date="2002" name="Genome Biol.">
        <title>Annotation of the Drosophila melanogaster euchromatic genome: a systematic review.</title>
        <authorList>
            <person name="Misra S."/>
            <person name="Crosby M.A."/>
            <person name="Mungall C.J."/>
            <person name="Matthews B.B."/>
            <person name="Campbell K.S."/>
            <person name="Hradecky P."/>
            <person name="Huang Y."/>
            <person name="Kaminker J.S."/>
            <person name="Millburn G.H."/>
            <person name="Prochnik S.E."/>
            <person name="Smith C.D."/>
            <person name="Tupy J.L."/>
            <person name="Whitfield E.J."/>
            <person name="Bayraktaroglu L."/>
            <person name="Berman B.P."/>
            <person name="Bettencourt B.R."/>
            <person name="Celniker S.E."/>
            <person name="de Grey A.D.N.J."/>
            <person name="Drysdale R.A."/>
            <person name="Harris N.L."/>
            <person name="Richter J."/>
            <person name="Russo S."/>
            <person name="Schroeder A.J."/>
            <person name="Shu S.Q."/>
            <person name="Stapleton M."/>
            <person name="Yamada C."/>
            <person name="Ashburner M."/>
            <person name="Gelbart W.M."/>
            <person name="Rubin G.M."/>
            <person name="Lewis S.E."/>
        </authorList>
    </citation>
    <scope>GENOME REANNOTATION</scope>
    <source>
        <strain>Berkeley</strain>
    </source>
</reference>
<reference key="4">
    <citation type="submission" date="2004-08" db="EMBL/GenBank/DDBJ databases">
        <authorList>
            <person name="Stapleton M."/>
            <person name="Carlson J.W."/>
            <person name="Chavez C."/>
            <person name="Frise E."/>
            <person name="George R.A."/>
            <person name="Pacleb J.M."/>
            <person name="Park S."/>
            <person name="Wan K.H."/>
            <person name="Yu C."/>
            <person name="Rubin G.M."/>
            <person name="Celniker S.E."/>
        </authorList>
    </citation>
    <scope>NUCLEOTIDE SEQUENCE [LARGE SCALE MRNA]</scope>
    <source>
        <strain>Berkeley</strain>
        <tissue>Larva</tissue>
        <tissue>Pupae</tissue>
    </source>
</reference>
<reference key="5">
    <citation type="journal article" date="2002" name="Genome Biol.">
        <title>A Drosophila full-length cDNA resource.</title>
        <authorList>
            <person name="Stapleton M."/>
            <person name="Carlson J.W."/>
            <person name="Brokstein P."/>
            <person name="Yu C."/>
            <person name="Champe M."/>
            <person name="George R.A."/>
            <person name="Guarin H."/>
            <person name="Kronmiller B."/>
            <person name="Pacleb J.M."/>
            <person name="Park S."/>
            <person name="Wan K.H."/>
            <person name="Rubin G.M."/>
            <person name="Celniker S.E."/>
        </authorList>
    </citation>
    <scope>NUCLEOTIDE SEQUENCE [LARGE SCALE MRNA] OF 448-928</scope>
    <source>
        <strain>Berkeley</strain>
        <tissue>Embryo</tissue>
    </source>
</reference>
<reference key="6">
    <citation type="journal article" date="2001" name="Development">
        <title>Successive specification of Drosophila neuroblasts NB 6-4 and NB 7-3 depends on interaction of the segment polarity genes wingless, gooseberry and naked cuticle.</title>
        <authorList>
            <person name="Deshpande N."/>
            <person name="Dittrich R."/>
            <person name="Technau G.M."/>
            <person name="Urban J."/>
        </authorList>
    </citation>
    <scope>FUNCTION</scope>
</reference>
<reference key="7">
    <citation type="journal article" date="2001" name="Dev. Biol.">
        <title>Vertebrate proteins related to Drosophila Naked Cuticle bind Dishevelled and antagonize Wnt signaling.</title>
        <authorList>
            <person name="Wharton K.A. Jr."/>
            <person name="Zimmermann G."/>
            <person name="Rousset R."/>
            <person name="Scott M.P."/>
        </authorList>
    </citation>
    <scope>INTERACTION WITH DSH</scope>
    <scope>DEVELOPMENTAL STAGE</scope>
</reference>
<reference key="8">
    <citation type="journal article" date="2001" name="Genes Dev.">
        <title>Naked cuticle targets dishevelled to antagonize Wnt signal transduction.</title>
        <authorList>
            <person name="Rousset R."/>
            <person name="Mack J.A."/>
            <person name="Wharton K.A. Jr."/>
            <person name="Axelrod J.D."/>
            <person name="Cadigan K.M."/>
            <person name="Fish M.P."/>
            <person name="Nusse R."/>
            <person name="Scott M.P."/>
        </authorList>
    </citation>
    <scope>FUNCTION</scope>
    <scope>INTERACTION WITH DSH</scope>
</reference>
<reference key="9">
    <citation type="journal article" date="2002" name="J. Biol. Chem.">
        <title>Zinc-dependent interaction between dishevelled and the Drosophila Wnt antagonist naked cuticle.</title>
        <authorList>
            <person name="Rousset R."/>
            <person name="Wharton K.A. Jr."/>
            <person name="Zimmermann G."/>
            <person name="Scott M.P."/>
        </authorList>
    </citation>
    <scope>INTERACTION WITH DSH</scope>
    <scope>ZINC-BINDING</scope>
</reference>
<reference key="10">
    <citation type="journal article" date="2005" name="Genetics">
        <title>RacGap50C negatively regulates wingless pathway activity during Drosophila embryonic development.</title>
        <authorList>
            <person name="Jones W.M."/>
            <person name="Bejsovec A."/>
        </authorList>
    </citation>
    <scope>FUNCTION</scope>
</reference>
<reference key="11">
    <citation type="journal article" date="2006" name="Genetics">
        <title>An unconventional nuclear localization motif is crucial for function of the Drosophila Wnt/wingless antagonist Naked cuticle.</title>
        <authorList>
            <person name="Waldrop S."/>
            <person name="Chan C.-C."/>
            <person name="Cagatay T."/>
            <person name="Zhang S."/>
            <person name="Rousset R."/>
            <person name="Mack J.A."/>
            <person name="Zeng W."/>
            <person name="Fish M.P."/>
            <person name="Zhang M."/>
            <person name="Amanai M."/>
            <person name="Wharton K.A. Jr."/>
        </authorList>
    </citation>
    <scope>FUNCTION</scope>
    <scope>INTERACTION WITH DSH</scope>
    <scope>SUBCELLULAR LOCATION</scope>
    <scope>DEVELOPMENTAL STAGE</scope>
</reference>
<reference key="12">
    <citation type="journal article" date="2008" name="J. Proteome Res.">
        <title>Phosphoproteome analysis of Drosophila melanogaster embryos.</title>
        <authorList>
            <person name="Zhai B."/>
            <person name="Villen J."/>
            <person name="Beausoleil S.A."/>
            <person name="Mintseris J."/>
            <person name="Gygi S.P."/>
        </authorList>
    </citation>
    <scope>PHOSPHORYLATION [LARGE SCALE ANALYSIS] AT SER-320; SER-327 AND SER-329</scope>
    <scope>IDENTIFICATION BY MASS SPECTROMETRY</scope>
    <source>
        <tissue>Embryo</tissue>
    </source>
</reference>
<dbReference type="EMBL" id="AF213376">
    <property type="protein sequence ID" value="AAF34825.1"/>
    <property type="molecule type" value="mRNA"/>
</dbReference>
<dbReference type="EMBL" id="AE014296">
    <property type="protein sequence ID" value="AAF49198.3"/>
    <property type="molecule type" value="Genomic_DNA"/>
</dbReference>
<dbReference type="EMBL" id="BT015258">
    <property type="protein sequence ID" value="AAT94487.1"/>
    <property type="molecule type" value="mRNA"/>
</dbReference>
<dbReference type="EMBL" id="AY061294">
    <property type="protein sequence ID" value="AAL28842.1"/>
    <property type="status" value="ALT_INIT"/>
    <property type="molecule type" value="mRNA"/>
</dbReference>
<dbReference type="RefSeq" id="NP_524788.2">
    <property type="nucleotide sequence ID" value="NM_080049.3"/>
</dbReference>
<dbReference type="BioGRID" id="69321">
    <property type="interactions" value="16"/>
</dbReference>
<dbReference type="DIP" id="DIP-20017N"/>
<dbReference type="FunCoup" id="Q9VVV9">
    <property type="interactions" value="224"/>
</dbReference>
<dbReference type="IntAct" id="Q9VVV9">
    <property type="interactions" value="4"/>
</dbReference>
<dbReference type="STRING" id="7227.FBpp0074806"/>
<dbReference type="GlyGen" id="Q9VVV9">
    <property type="glycosylation" value="1 site"/>
</dbReference>
<dbReference type="iPTMnet" id="Q9VVV9"/>
<dbReference type="PaxDb" id="7227-FBpp0074806"/>
<dbReference type="EnsemblMetazoa" id="FBtr0075039">
    <property type="protein sequence ID" value="FBpp0074806"/>
    <property type="gene ID" value="FBgn0002945"/>
</dbReference>
<dbReference type="GeneID" id="44843"/>
<dbReference type="KEGG" id="dme:Dmel_CG11614"/>
<dbReference type="AGR" id="FB:FBgn0002945"/>
<dbReference type="CTD" id="44843"/>
<dbReference type="FlyBase" id="FBgn0002945">
    <property type="gene designation" value="nkd"/>
</dbReference>
<dbReference type="VEuPathDB" id="VectorBase:FBgn0002945"/>
<dbReference type="eggNOG" id="ENOG502QT1X">
    <property type="taxonomic scope" value="Eukaryota"/>
</dbReference>
<dbReference type="GeneTree" id="ENSGT00440000033589"/>
<dbReference type="HOGENOM" id="CLU_314556_0_0_1"/>
<dbReference type="InParanoid" id="Q9VVV9"/>
<dbReference type="OMA" id="EQHTPDN"/>
<dbReference type="OrthoDB" id="5953812at2759"/>
<dbReference type="PhylomeDB" id="Q9VVV9"/>
<dbReference type="BioGRID-ORCS" id="44843">
    <property type="hits" value="0 hits in 3 CRISPR screens"/>
</dbReference>
<dbReference type="GenomeRNAi" id="44843"/>
<dbReference type="PRO" id="PR:Q9VVV9"/>
<dbReference type="Proteomes" id="UP000000803">
    <property type="component" value="Chromosome 3L"/>
</dbReference>
<dbReference type="Bgee" id="FBgn0002945">
    <property type="expression patterns" value="Expressed in muscle cell in male reproductive gland and 282 other cell types or tissues"/>
</dbReference>
<dbReference type="ExpressionAtlas" id="Q9VVV9">
    <property type="expression patterns" value="baseline and differential"/>
</dbReference>
<dbReference type="GO" id="GO:0005737">
    <property type="term" value="C:cytoplasm"/>
    <property type="evidence" value="ECO:0000314"/>
    <property type="project" value="UniProtKB"/>
</dbReference>
<dbReference type="GO" id="GO:0005829">
    <property type="term" value="C:cytosol"/>
    <property type="evidence" value="ECO:0000314"/>
    <property type="project" value="FlyBase"/>
</dbReference>
<dbReference type="GO" id="GO:0005634">
    <property type="term" value="C:nucleus"/>
    <property type="evidence" value="ECO:0000314"/>
    <property type="project" value="UniProtKB"/>
</dbReference>
<dbReference type="GO" id="GO:0005886">
    <property type="term" value="C:plasma membrane"/>
    <property type="evidence" value="ECO:0007669"/>
    <property type="project" value="UniProtKB-SubCell"/>
</dbReference>
<dbReference type="GO" id="GO:0030165">
    <property type="term" value="F:PDZ domain binding"/>
    <property type="evidence" value="ECO:0000353"/>
    <property type="project" value="BHF-UCL"/>
</dbReference>
<dbReference type="GO" id="GO:0008270">
    <property type="term" value="F:zinc ion binding"/>
    <property type="evidence" value="ECO:0000314"/>
    <property type="project" value="UniProtKB"/>
</dbReference>
<dbReference type="GO" id="GO:0090090">
    <property type="term" value="P:negative regulation of canonical Wnt signaling pathway"/>
    <property type="evidence" value="ECO:0000315"/>
    <property type="project" value="FlyBase"/>
</dbReference>
<dbReference type="GO" id="GO:0030178">
    <property type="term" value="P:negative regulation of Wnt signaling pathway"/>
    <property type="evidence" value="ECO:0000318"/>
    <property type="project" value="GO_Central"/>
</dbReference>
<dbReference type="GO" id="GO:0014018">
    <property type="term" value="P:neuroblast fate specification"/>
    <property type="evidence" value="ECO:0000315"/>
    <property type="project" value="UniProtKB"/>
</dbReference>
<dbReference type="GO" id="GO:0090263">
    <property type="term" value="P:positive regulation of canonical Wnt signaling pathway"/>
    <property type="evidence" value="ECO:0000315"/>
    <property type="project" value="FlyBase"/>
</dbReference>
<dbReference type="GO" id="GO:0007367">
    <property type="term" value="P:segment polarity determination"/>
    <property type="evidence" value="ECO:0000315"/>
    <property type="project" value="FlyBase"/>
</dbReference>
<dbReference type="GO" id="GO:0016055">
    <property type="term" value="P:Wnt signaling pathway"/>
    <property type="evidence" value="ECO:0007669"/>
    <property type="project" value="UniProtKB-KW"/>
</dbReference>
<dbReference type="InterPro" id="IPR040140">
    <property type="entry name" value="Nkd-like"/>
</dbReference>
<dbReference type="PANTHER" id="PTHR22611">
    <property type="entry name" value="PROTEIN NAKED CUTICLE"/>
    <property type="match status" value="1"/>
</dbReference>
<dbReference type="PANTHER" id="PTHR22611:SF9">
    <property type="entry name" value="PROTEIN NAKED CUTICLE"/>
    <property type="match status" value="1"/>
</dbReference>
<proteinExistence type="evidence at protein level"/>
<evidence type="ECO:0000255" key="1">
    <source>
        <dbReference type="PROSITE-ProRule" id="PRU00448"/>
    </source>
</evidence>
<evidence type="ECO:0000256" key="2">
    <source>
        <dbReference type="SAM" id="MobiDB-lite"/>
    </source>
</evidence>
<evidence type="ECO:0000269" key="3">
    <source>
    </source>
</evidence>
<evidence type="ECO:0000269" key="4">
    <source>
    </source>
</evidence>
<evidence type="ECO:0000269" key="5">
    <source>
    </source>
</evidence>
<evidence type="ECO:0000269" key="6">
    <source>
    </source>
</evidence>
<evidence type="ECO:0000269" key="7">
    <source>
    </source>
</evidence>
<evidence type="ECO:0000269" key="8">
    <source>
    </source>
</evidence>
<evidence type="ECO:0000269" key="9">
    <source>
    </source>
</evidence>
<evidence type="ECO:0000269" key="10">
    <source>
    </source>
</evidence>
<evidence type="ECO:0000305" key="11"/>